<feature type="signal peptide" evidence="4">
    <location>
        <begin position="1"/>
        <end position="19"/>
    </location>
</feature>
<feature type="chain" id="PRO_0000006287" description="Cysteine-rich venom protein triflin">
    <location>
        <begin position="20"/>
        <end position="240"/>
    </location>
</feature>
<feature type="domain" description="SCP">
    <location>
        <begin position="39"/>
        <end position="166"/>
    </location>
</feature>
<feature type="domain" description="ShKT" evidence="1">
    <location>
        <begin position="202"/>
        <end position="235"/>
    </location>
</feature>
<feature type="disulfide bond" evidence="1 3">
    <location>
        <begin position="75"/>
        <end position="153"/>
    </location>
</feature>
<feature type="disulfide bond" evidence="1 3">
    <location>
        <begin position="92"/>
        <end position="167"/>
    </location>
</feature>
<feature type="disulfide bond" evidence="1 3">
    <location>
        <begin position="148"/>
        <end position="164"/>
    </location>
</feature>
<feature type="disulfide bond" evidence="1 3">
    <location>
        <begin position="186"/>
        <end position="193"/>
    </location>
</feature>
<feature type="disulfide bond" evidence="1 3">
    <location>
        <begin position="189"/>
        <end position="198"/>
    </location>
</feature>
<feature type="disulfide bond" evidence="1 3">
    <location>
        <begin position="202"/>
        <end position="235"/>
    </location>
</feature>
<feature type="disulfide bond" evidence="1 3">
    <location>
        <begin position="211"/>
        <end position="229"/>
    </location>
</feature>
<feature type="disulfide bond" evidence="1 3">
    <location>
        <begin position="220"/>
        <end position="233"/>
    </location>
</feature>
<feature type="helix" evidence="7">
    <location>
        <begin position="24"/>
        <end position="26"/>
    </location>
</feature>
<feature type="helix" evidence="7">
    <location>
        <begin position="31"/>
        <end position="46"/>
    </location>
</feature>
<feature type="strand" evidence="7">
    <location>
        <begin position="52"/>
        <end position="54"/>
    </location>
</feature>
<feature type="helix" evidence="7">
    <location>
        <begin position="62"/>
        <end position="72"/>
    </location>
</feature>
<feature type="turn" evidence="7">
    <location>
        <begin position="73"/>
        <end position="75"/>
    </location>
</feature>
<feature type="turn" evidence="7">
    <location>
        <begin position="82"/>
        <end position="85"/>
    </location>
</feature>
<feature type="strand" evidence="7">
    <location>
        <begin position="93"/>
        <end position="101"/>
    </location>
</feature>
<feature type="helix" evidence="7">
    <location>
        <begin position="105"/>
        <end position="113"/>
    </location>
</feature>
<feature type="helix" evidence="7">
    <location>
        <begin position="114"/>
        <end position="118"/>
    </location>
</feature>
<feature type="turn" evidence="7">
    <location>
        <begin position="121"/>
        <end position="123"/>
    </location>
</feature>
<feature type="strand" evidence="7">
    <location>
        <begin position="124"/>
        <end position="127"/>
    </location>
</feature>
<feature type="helix" evidence="7">
    <location>
        <begin position="133"/>
        <end position="138"/>
    </location>
</feature>
<feature type="strand" evidence="7">
    <location>
        <begin position="145"/>
        <end position="152"/>
    </location>
</feature>
<feature type="strand" evidence="7">
    <location>
        <begin position="156"/>
        <end position="168"/>
    </location>
</feature>
<feature type="turn" evidence="6">
    <location>
        <begin position="173"/>
        <end position="177"/>
    </location>
</feature>
<feature type="strand" evidence="7">
    <location>
        <begin position="182"/>
        <end position="184"/>
    </location>
</feature>
<feature type="turn" evidence="7">
    <location>
        <begin position="185"/>
        <end position="188"/>
    </location>
</feature>
<feature type="strand" evidence="7">
    <location>
        <begin position="192"/>
        <end position="194"/>
    </location>
</feature>
<feature type="helix" evidence="7">
    <location>
        <begin position="211"/>
        <end position="214"/>
    </location>
</feature>
<feature type="helix" evidence="7">
    <location>
        <begin position="225"/>
        <end position="228"/>
    </location>
</feature>
<feature type="turn" evidence="7">
    <location>
        <begin position="230"/>
        <end position="234"/>
    </location>
</feature>
<evidence type="ECO:0000255" key="1">
    <source>
        <dbReference type="PROSITE-ProRule" id="PRU01005"/>
    </source>
</evidence>
<evidence type="ECO:0000269" key="2">
    <source>
    </source>
</evidence>
<evidence type="ECO:0000269" key="3">
    <source>
    </source>
</evidence>
<evidence type="ECO:0000269" key="4">
    <source>
    </source>
</evidence>
<evidence type="ECO:0000305" key="5"/>
<evidence type="ECO:0007829" key="6">
    <source>
        <dbReference type="PDB" id="1WVR"/>
    </source>
</evidence>
<evidence type="ECO:0007829" key="7">
    <source>
        <dbReference type="PDB" id="6IMF"/>
    </source>
</evidence>
<organism>
    <name type="scientific">Protobothrops flavoviridis</name>
    <name type="common">Habu</name>
    <name type="synonym">Trimeresurus flavoviridis</name>
    <dbReference type="NCBI Taxonomy" id="88087"/>
    <lineage>
        <taxon>Eukaryota</taxon>
        <taxon>Metazoa</taxon>
        <taxon>Chordata</taxon>
        <taxon>Craniata</taxon>
        <taxon>Vertebrata</taxon>
        <taxon>Euteleostomi</taxon>
        <taxon>Lepidosauria</taxon>
        <taxon>Squamata</taxon>
        <taxon>Bifurcata</taxon>
        <taxon>Unidentata</taxon>
        <taxon>Episquamata</taxon>
        <taxon>Toxicofera</taxon>
        <taxon>Serpentes</taxon>
        <taxon>Colubroidea</taxon>
        <taxon>Viperidae</taxon>
        <taxon>Crotalinae</taxon>
        <taxon>Protobothrops</taxon>
    </lineage>
</organism>
<accession>Q8JI39</accession>
<name>CRVP_PROFL</name>
<protein>
    <recommendedName>
        <fullName>Cysteine-rich venom protein triflin</fullName>
        <shortName>CRVP</shortName>
    </recommendedName>
</protein>
<keyword id="KW-0002">3D-structure</keyword>
<keyword id="KW-0108">Calcium channel impairing toxin</keyword>
<keyword id="KW-0903">Direct protein sequencing</keyword>
<keyword id="KW-1015">Disulfide bond</keyword>
<keyword id="KW-0872">Ion channel impairing toxin</keyword>
<keyword id="KW-0528">Neurotoxin</keyword>
<keyword id="KW-0964">Secreted</keyword>
<keyword id="KW-0732">Signal</keyword>
<keyword id="KW-0800">Toxin</keyword>
<keyword id="KW-1218">Voltage-gated calcium channel impairing toxin</keyword>
<sequence length="240" mass="26752">MIAFIVLPILAAVLQQSSGNVDFDSESPRKPEIQNEIIDLHNSLRRSVNPTASNMLKMEWYPEAAANAERWAYRCIESHSSRDSRVIGGIKCGENIYMATYPAKWTDIIHAWHGEYKDFKYGVGAVPSDAVIGHYTQIVWYKSYRAGCAAAYCPSSKYSYFYVCQYCPAGNIIGKTATPYKSGPPCGDCPSDCDNGLCTNPCTRENEFTNCDSLVQKSSCQDNYMKSKCPASCFCQNKII</sequence>
<dbReference type="EMBL" id="AF384219">
    <property type="protein sequence ID" value="AAM45665.1"/>
    <property type="molecule type" value="mRNA"/>
</dbReference>
<dbReference type="PDB" id="1WVR">
    <property type="method" value="X-ray"/>
    <property type="resolution" value="2.40 A"/>
    <property type="chains" value="A=20-240"/>
</dbReference>
<dbReference type="PDB" id="6IMF">
    <property type="method" value="X-ray"/>
    <property type="resolution" value="2.30 A"/>
    <property type="chains" value="A=20-240"/>
</dbReference>
<dbReference type="PDBsum" id="1WVR"/>
<dbReference type="PDBsum" id="6IMF"/>
<dbReference type="SMR" id="Q8JI39"/>
<dbReference type="TCDB" id="8.B.9.1.1">
    <property type="family name" value="the triflin toxin (triflin or crisp) family"/>
</dbReference>
<dbReference type="EvolutionaryTrace" id="Q8JI39"/>
<dbReference type="GO" id="GO:0005576">
    <property type="term" value="C:extracellular region"/>
    <property type="evidence" value="ECO:0007669"/>
    <property type="project" value="UniProtKB-SubCell"/>
</dbReference>
<dbReference type="GO" id="GO:0005246">
    <property type="term" value="F:calcium channel regulator activity"/>
    <property type="evidence" value="ECO:0007669"/>
    <property type="project" value="UniProtKB-KW"/>
</dbReference>
<dbReference type="GO" id="GO:0090729">
    <property type="term" value="F:toxin activity"/>
    <property type="evidence" value="ECO:0007669"/>
    <property type="project" value="UniProtKB-KW"/>
</dbReference>
<dbReference type="CDD" id="cd05383">
    <property type="entry name" value="CAP_CRISP"/>
    <property type="match status" value="1"/>
</dbReference>
<dbReference type="FunFam" id="1.10.10.740:FF:000001">
    <property type="entry name" value="Cysteine-rich secretory protein 2"/>
    <property type="match status" value="1"/>
</dbReference>
<dbReference type="FunFam" id="3.40.33.10:FF:000005">
    <property type="entry name" value="Cysteine-rich secretory protein 2"/>
    <property type="match status" value="1"/>
</dbReference>
<dbReference type="Gene3D" id="3.40.33.10">
    <property type="entry name" value="CAP"/>
    <property type="match status" value="1"/>
</dbReference>
<dbReference type="Gene3D" id="1.10.10.740">
    <property type="entry name" value="Crisp domain"/>
    <property type="match status" value="1"/>
</dbReference>
<dbReference type="InterPro" id="IPR018244">
    <property type="entry name" value="Allrgn_V5/Tpx1_CS"/>
</dbReference>
<dbReference type="InterPro" id="IPR014044">
    <property type="entry name" value="CAP_dom"/>
</dbReference>
<dbReference type="InterPro" id="IPR035940">
    <property type="entry name" value="CAP_sf"/>
</dbReference>
<dbReference type="InterPro" id="IPR042076">
    <property type="entry name" value="Crisp-like_dom"/>
</dbReference>
<dbReference type="InterPro" id="IPR001283">
    <property type="entry name" value="CRISP-related"/>
</dbReference>
<dbReference type="InterPro" id="IPR013871">
    <property type="entry name" value="Cysteine_rich_secretory"/>
</dbReference>
<dbReference type="InterPro" id="IPR034117">
    <property type="entry name" value="SCP_CRISP"/>
</dbReference>
<dbReference type="InterPro" id="IPR003582">
    <property type="entry name" value="ShKT_dom"/>
</dbReference>
<dbReference type="InterPro" id="IPR002413">
    <property type="entry name" value="V5_allergen-like"/>
</dbReference>
<dbReference type="PANTHER" id="PTHR10334">
    <property type="entry name" value="CYSTEINE-RICH SECRETORY PROTEIN-RELATED"/>
    <property type="match status" value="1"/>
</dbReference>
<dbReference type="Pfam" id="PF00188">
    <property type="entry name" value="CAP"/>
    <property type="match status" value="1"/>
</dbReference>
<dbReference type="Pfam" id="PF08562">
    <property type="entry name" value="Crisp"/>
    <property type="match status" value="1"/>
</dbReference>
<dbReference type="PRINTS" id="PR00838">
    <property type="entry name" value="V5ALLERGEN"/>
</dbReference>
<dbReference type="PRINTS" id="PR00837">
    <property type="entry name" value="V5TPXLIKE"/>
</dbReference>
<dbReference type="SMART" id="SM00198">
    <property type="entry name" value="SCP"/>
    <property type="match status" value="1"/>
</dbReference>
<dbReference type="SUPFAM" id="SSF57546">
    <property type="entry name" value="Crisp domain-like"/>
    <property type="match status" value="1"/>
</dbReference>
<dbReference type="SUPFAM" id="SSF55797">
    <property type="entry name" value="PR-1-like"/>
    <property type="match status" value="1"/>
</dbReference>
<dbReference type="PROSITE" id="PS01009">
    <property type="entry name" value="CRISP_1"/>
    <property type="match status" value="1"/>
</dbReference>
<dbReference type="PROSITE" id="PS01010">
    <property type="entry name" value="CRISP_2"/>
    <property type="match status" value="1"/>
</dbReference>
<dbReference type="PROSITE" id="PS51670">
    <property type="entry name" value="SHKT"/>
    <property type="match status" value="1"/>
</dbReference>
<reference key="1">
    <citation type="journal article" date="2002" name="Eur. J. Biochem.">
        <title>Cloning and characterization of novel snake venom proteins that block smooth muscle contraction.</title>
        <authorList>
            <person name="Yamazaki Y."/>
            <person name="Koike H."/>
            <person name="Sugiyama Y."/>
            <person name="Motoyoshi K."/>
            <person name="Wada T."/>
            <person name="Hishinuma S."/>
            <person name="Mita M."/>
            <person name="Morita T."/>
        </authorList>
    </citation>
    <scope>NUCLEOTIDE SEQUENCE [MRNA]</scope>
    <scope>FUNCTION</scope>
    <source>
        <tissue>Venom</tissue>
        <tissue>Venom gland</tissue>
    </source>
</reference>
<reference key="2">
    <citation type="journal article" date="2007" name="Biochem. Biophys. Res. Commun.">
        <title>Identification of novel serum proteins in a Japanese viper: homologs of mammalian PSP94.</title>
        <authorList>
            <person name="Aoki N."/>
            <person name="Sakiyama A."/>
            <person name="Deshimaru M."/>
            <person name="Terada S."/>
        </authorList>
    </citation>
    <scope>PROTEIN SEQUENCE OF 20-49</scope>
    <scope>SUBUNIT WITH SSP-2</scope>
    <source>
        <tissue>Venom</tissue>
    </source>
</reference>
<reference key="3">
    <citation type="journal article" date="2005" name="J. Mol. Biol.">
        <title>Crystal structure of a CRISP family Ca2+ -channel blocker derived from snake venom.</title>
        <authorList>
            <person name="Shikamoto Y."/>
            <person name="Suto K."/>
            <person name="Yamazaki Y."/>
            <person name="Morita T."/>
            <person name="Mizuno H."/>
        </authorList>
    </citation>
    <scope>X-RAY CRYSTALLOGRAPHY (2.4 ANGSTROMS) OF 20-240</scope>
    <scope>DISULFIDE BONDS</scope>
</reference>
<proteinExistence type="evidence at protein level"/>
<comment type="function">
    <text evidence="2">Blocks contraction of smooth muscle elicited by high potassium-induced depolarization (PubMed:12047379). May target voltage-gated calcium channels (Cav) on smooth muscle.</text>
</comment>
<comment type="subunit">
    <text evidence="4">Forms a stable, non-covalent complex with SSP-2.</text>
</comment>
<comment type="subcellular location">
    <subcellularLocation>
        <location>Secreted</location>
    </subcellularLocation>
</comment>
<comment type="tissue specificity">
    <text>Expressed by the venom gland.</text>
</comment>
<comment type="similarity">
    <text evidence="5">Belongs to the CRISP family.</text>
</comment>